<feature type="chain" id="PRO_0000302907" description="S-adenosylmethionine synthase">
    <location>
        <begin position="1"/>
        <end position="391"/>
    </location>
</feature>
<feature type="region of interest" description="Flexible loop" evidence="1">
    <location>
        <begin position="98"/>
        <end position="108"/>
    </location>
</feature>
<feature type="binding site" description="in other chain" evidence="1">
    <location>
        <position position="14"/>
    </location>
    <ligand>
        <name>ATP</name>
        <dbReference type="ChEBI" id="CHEBI:30616"/>
        <note>ligand shared between two neighboring subunits</note>
    </ligand>
</feature>
<feature type="binding site" evidence="1">
    <location>
        <position position="16"/>
    </location>
    <ligand>
        <name>Mg(2+)</name>
        <dbReference type="ChEBI" id="CHEBI:18420"/>
    </ligand>
</feature>
<feature type="binding site" evidence="1">
    <location>
        <position position="42"/>
    </location>
    <ligand>
        <name>K(+)</name>
        <dbReference type="ChEBI" id="CHEBI:29103"/>
    </ligand>
</feature>
<feature type="binding site" description="in other chain" evidence="1">
    <location>
        <position position="55"/>
    </location>
    <ligand>
        <name>L-methionine</name>
        <dbReference type="ChEBI" id="CHEBI:57844"/>
        <note>ligand shared between two neighboring subunits</note>
    </ligand>
</feature>
<feature type="binding site" description="in other chain" evidence="1">
    <location>
        <position position="98"/>
    </location>
    <ligand>
        <name>L-methionine</name>
        <dbReference type="ChEBI" id="CHEBI:57844"/>
        <note>ligand shared between two neighboring subunits</note>
    </ligand>
</feature>
<feature type="binding site" description="in other chain" evidence="1">
    <location>
        <begin position="172"/>
        <end position="174"/>
    </location>
    <ligand>
        <name>ATP</name>
        <dbReference type="ChEBI" id="CHEBI:30616"/>
        <note>ligand shared between two neighboring subunits</note>
    </ligand>
</feature>
<feature type="binding site" description="in other chain" evidence="1">
    <location>
        <begin position="238"/>
        <end position="239"/>
    </location>
    <ligand>
        <name>ATP</name>
        <dbReference type="ChEBI" id="CHEBI:30616"/>
        <note>ligand shared between two neighboring subunits</note>
    </ligand>
</feature>
<feature type="binding site" evidence="1">
    <location>
        <position position="247"/>
    </location>
    <ligand>
        <name>ATP</name>
        <dbReference type="ChEBI" id="CHEBI:30616"/>
        <note>ligand shared between two neighboring subunits</note>
    </ligand>
</feature>
<feature type="binding site" evidence="1">
    <location>
        <position position="247"/>
    </location>
    <ligand>
        <name>L-methionine</name>
        <dbReference type="ChEBI" id="CHEBI:57844"/>
        <note>ligand shared between two neighboring subunits</note>
    </ligand>
</feature>
<feature type="binding site" description="in other chain" evidence="1">
    <location>
        <begin position="253"/>
        <end position="254"/>
    </location>
    <ligand>
        <name>ATP</name>
        <dbReference type="ChEBI" id="CHEBI:30616"/>
        <note>ligand shared between two neighboring subunits</note>
    </ligand>
</feature>
<feature type="binding site" evidence="1">
    <location>
        <position position="270"/>
    </location>
    <ligand>
        <name>ATP</name>
        <dbReference type="ChEBI" id="CHEBI:30616"/>
        <note>ligand shared between two neighboring subunits</note>
    </ligand>
</feature>
<feature type="binding site" evidence="1">
    <location>
        <position position="274"/>
    </location>
    <ligand>
        <name>ATP</name>
        <dbReference type="ChEBI" id="CHEBI:30616"/>
        <note>ligand shared between two neighboring subunits</note>
    </ligand>
</feature>
<feature type="binding site" description="in other chain" evidence="1">
    <location>
        <position position="278"/>
    </location>
    <ligand>
        <name>L-methionine</name>
        <dbReference type="ChEBI" id="CHEBI:57844"/>
        <note>ligand shared between two neighboring subunits</note>
    </ligand>
</feature>
<comment type="function">
    <text evidence="1">Catalyzes the formation of S-adenosylmethionine (AdoMet) from methionine and ATP. The overall synthetic reaction is composed of two sequential steps, AdoMet formation and the subsequent tripolyphosphate hydrolysis which occurs prior to release of AdoMet from the enzyme.</text>
</comment>
<comment type="catalytic activity">
    <reaction evidence="1">
        <text>L-methionine + ATP + H2O = S-adenosyl-L-methionine + phosphate + diphosphate</text>
        <dbReference type="Rhea" id="RHEA:21080"/>
        <dbReference type="ChEBI" id="CHEBI:15377"/>
        <dbReference type="ChEBI" id="CHEBI:30616"/>
        <dbReference type="ChEBI" id="CHEBI:33019"/>
        <dbReference type="ChEBI" id="CHEBI:43474"/>
        <dbReference type="ChEBI" id="CHEBI:57844"/>
        <dbReference type="ChEBI" id="CHEBI:59789"/>
        <dbReference type="EC" id="2.5.1.6"/>
    </reaction>
</comment>
<comment type="cofactor">
    <cofactor evidence="1">
        <name>Mg(2+)</name>
        <dbReference type="ChEBI" id="CHEBI:18420"/>
    </cofactor>
    <text evidence="1">Binds 2 divalent ions per subunit.</text>
</comment>
<comment type="cofactor">
    <cofactor evidence="1">
        <name>K(+)</name>
        <dbReference type="ChEBI" id="CHEBI:29103"/>
    </cofactor>
    <text evidence="1">Binds 1 potassium ion per subunit.</text>
</comment>
<comment type="pathway">
    <text evidence="1">Amino-acid biosynthesis; S-adenosyl-L-methionine biosynthesis; S-adenosyl-L-methionine from L-methionine: step 1/1.</text>
</comment>
<comment type="subunit">
    <text evidence="1">Homotetramer; dimer of dimers.</text>
</comment>
<comment type="subcellular location">
    <subcellularLocation>
        <location evidence="1">Cytoplasm</location>
    </subcellularLocation>
</comment>
<comment type="similarity">
    <text evidence="1">Belongs to the AdoMet synthase family.</text>
</comment>
<proteinExistence type="inferred from homology"/>
<sequence length="391" mass="42883">MRRLFTSESVTEGHPDKICDQISDAVLDAIFAKDPNARVACETAVTTGLVMVMGEITTNCYVDIPKIARETIKNIGYDRAKYGFDCETCSVMTTIDEQSSDIAMGVDEALESRAGEKIDIDAVGAGDQGMMFGFATNETEEFMPAPIAMAHRLSRRLTEVRKNGTLPYLRPDGKTQVTVEYENDKPVRIDAIVISTQHGPEVSQEQIQADLMEHVIKAVIPAELLDENTKYYINPTGRFVIGGPQGDAGLTGRKIIVDTYGGYGRHGGGAFSGKDPTKVDRSAAYAARWVAKNLVAAGIADKLEVQVAYAIGVAKPVSIIVDTFGTGKISDEEIVNIINKVFDLRPGAIIRDLDLRRPIYRQTAAYGHFGRTDLDLPWENLNKVEEIKKYL</sequence>
<accession>Q0SR05</accession>
<gene>
    <name evidence="1" type="primary">metK</name>
    <name type="ordered locus">CPR_2145</name>
</gene>
<name>METK_CLOPS</name>
<reference key="1">
    <citation type="journal article" date="2006" name="Genome Res.">
        <title>Skewed genomic variability in strains of the toxigenic bacterial pathogen, Clostridium perfringens.</title>
        <authorList>
            <person name="Myers G.S.A."/>
            <person name="Rasko D.A."/>
            <person name="Cheung J.K."/>
            <person name="Ravel J."/>
            <person name="Seshadri R."/>
            <person name="DeBoy R.T."/>
            <person name="Ren Q."/>
            <person name="Varga J."/>
            <person name="Awad M.M."/>
            <person name="Brinkac L.M."/>
            <person name="Daugherty S.C."/>
            <person name="Haft D.H."/>
            <person name="Dodson R.J."/>
            <person name="Madupu R."/>
            <person name="Nelson W.C."/>
            <person name="Rosovitz M.J."/>
            <person name="Sullivan S.A."/>
            <person name="Khouri H."/>
            <person name="Dimitrov G.I."/>
            <person name="Watkins K.L."/>
            <person name="Mulligan S."/>
            <person name="Benton J."/>
            <person name="Radune D."/>
            <person name="Fisher D.J."/>
            <person name="Atkins H.S."/>
            <person name="Hiscox T."/>
            <person name="Jost B.H."/>
            <person name="Billington S.J."/>
            <person name="Songer J.G."/>
            <person name="McClane B.A."/>
            <person name="Titball R.W."/>
            <person name="Rood J.I."/>
            <person name="Melville S.B."/>
            <person name="Paulsen I.T."/>
        </authorList>
    </citation>
    <scope>NUCLEOTIDE SEQUENCE [LARGE SCALE GENOMIC DNA]</scope>
    <source>
        <strain>SM101 / Type A</strain>
    </source>
</reference>
<protein>
    <recommendedName>
        <fullName evidence="1">S-adenosylmethionine synthase</fullName>
        <shortName evidence="1">AdoMet synthase</shortName>
        <ecNumber evidence="1">2.5.1.6</ecNumber>
    </recommendedName>
    <alternativeName>
        <fullName evidence="1">MAT</fullName>
    </alternativeName>
    <alternativeName>
        <fullName evidence="1">Methionine adenosyltransferase</fullName>
    </alternativeName>
</protein>
<keyword id="KW-0067">ATP-binding</keyword>
<keyword id="KW-0963">Cytoplasm</keyword>
<keyword id="KW-0460">Magnesium</keyword>
<keyword id="KW-0479">Metal-binding</keyword>
<keyword id="KW-0547">Nucleotide-binding</keyword>
<keyword id="KW-0554">One-carbon metabolism</keyword>
<keyword id="KW-0630">Potassium</keyword>
<keyword id="KW-0808">Transferase</keyword>
<organism>
    <name type="scientific">Clostridium perfringens (strain SM101 / Type A)</name>
    <dbReference type="NCBI Taxonomy" id="289380"/>
    <lineage>
        <taxon>Bacteria</taxon>
        <taxon>Bacillati</taxon>
        <taxon>Bacillota</taxon>
        <taxon>Clostridia</taxon>
        <taxon>Eubacteriales</taxon>
        <taxon>Clostridiaceae</taxon>
        <taxon>Clostridium</taxon>
    </lineage>
</organism>
<dbReference type="EC" id="2.5.1.6" evidence="1"/>
<dbReference type="EMBL" id="CP000312">
    <property type="protein sequence ID" value="ABG86575.1"/>
    <property type="molecule type" value="Genomic_DNA"/>
</dbReference>
<dbReference type="RefSeq" id="WP_003452418.1">
    <property type="nucleotide sequence ID" value="NZ_CAXVKH010000006.1"/>
</dbReference>
<dbReference type="SMR" id="Q0SR05"/>
<dbReference type="GeneID" id="93001287"/>
<dbReference type="KEGG" id="cpr:CPR_2145"/>
<dbReference type="UniPathway" id="UPA00315">
    <property type="reaction ID" value="UER00080"/>
</dbReference>
<dbReference type="Proteomes" id="UP000001824">
    <property type="component" value="Chromosome"/>
</dbReference>
<dbReference type="GO" id="GO:0005737">
    <property type="term" value="C:cytoplasm"/>
    <property type="evidence" value="ECO:0007669"/>
    <property type="project" value="UniProtKB-SubCell"/>
</dbReference>
<dbReference type="GO" id="GO:0005524">
    <property type="term" value="F:ATP binding"/>
    <property type="evidence" value="ECO:0007669"/>
    <property type="project" value="UniProtKB-UniRule"/>
</dbReference>
<dbReference type="GO" id="GO:0000287">
    <property type="term" value="F:magnesium ion binding"/>
    <property type="evidence" value="ECO:0007669"/>
    <property type="project" value="UniProtKB-UniRule"/>
</dbReference>
<dbReference type="GO" id="GO:0004478">
    <property type="term" value="F:methionine adenosyltransferase activity"/>
    <property type="evidence" value="ECO:0007669"/>
    <property type="project" value="UniProtKB-UniRule"/>
</dbReference>
<dbReference type="GO" id="GO:0006730">
    <property type="term" value="P:one-carbon metabolic process"/>
    <property type="evidence" value="ECO:0007669"/>
    <property type="project" value="UniProtKB-KW"/>
</dbReference>
<dbReference type="GO" id="GO:0006556">
    <property type="term" value="P:S-adenosylmethionine biosynthetic process"/>
    <property type="evidence" value="ECO:0007669"/>
    <property type="project" value="UniProtKB-UniRule"/>
</dbReference>
<dbReference type="CDD" id="cd18079">
    <property type="entry name" value="S-AdoMet_synt"/>
    <property type="match status" value="1"/>
</dbReference>
<dbReference type="FunFam" id="3.30.300.10:FF:000003">
    <property type="entry name" value="S-adenosylmethionine synthase"/>
    <property type="match status" value="1"/>
</dbReference>
<dbReference type="FunFam" id="3.30.300.10:FF:000004">
    <property type="entry name" value="S-adenosylmethionine synthase"/>
    <property type="match status" value="1"/>
</dbReference>
<dbReference type="Gene3D" id="3.30.300.10">
    <property type="match status" value="3"/>
</dbReference>
<dbReference type="HAMAP" id="MF_00086">
    <property type="entry name" value="S_AdoMet_synth1"/>
    <property type="match status" value="1"/>
</dbReference>
<dbReference type="InterPro" id="IPR022631">
    <property type="entry name" value="ADOMET_SYNTHASE_CS"/>
</dbReference>
<dbReference type="InterPro" id="IPR022630">
    <property type="entry name" value="S-AdoMet_synt_C"/>
</dbReference>
<dbReference type="InterPro" id="IPR022629">
    <property type="entry name" value="S-AdoMet_synt_central"/>
</dbReference>
<dbReference type="InterPro" id="IPR022628">
    <property type="entry name" value="S-AdoMet_synt_N"/>
</dbReference>
<dbReference type="InterPro" id="IPR002133">
    <property type="entry name" value="S-AdoMet_synthetase"/>
</dbReference>
<dbReference type="InterPro" id="IPR022636">
    <property type="entry name" value="S-AdoMet_synthetase_sfam"/>
</dbReference>
<dbReference type="NCBIfam" id="TIGR01034">
    <property type="entry name" value="metK"/>
    <property type="match status" value="1"/>
</dbReference>
<dbReference type="PANTHER" id="PTHR11964">
    <property type="entry name" value="S-ADENOSYLMETHIONINE SYNTHETASE"/>
    <property type="match status" value="1"/>
</dbReference>
<dbReference type="Pfam" id="PF02773">
    <property type="entry name" value="S-AdoMet_synt_C"/>
    <property type="match status" value="1"/>
</dbReference>
<dbReference type="Pfam" id="PF02772">
    <property type="entry name" value="S-AdoMet_synt_M"/>
    <property type="match status" value="1"/>
</dbReference>
<dbReference type="Pfam" id="PF00438">
    <property type="entry name" value="S-AdoMet_synt_N"/>
    <property type="match status" value="1"/>
</dbReference>
<dbReference type="PIRSF" id="PIRSF000497">
    <property type="entry name" value="MAT"/>
    <property type="match status" value="1"/>
</dbReference>
<dbReference type="SUPFAM" id="SSF55973">
    <property type="entry name" value="S-adenosylmethionine synthetase"/>
    <property type="match status" value="3"/>
</dbReference>
<dbReference type="PROSITE" id="PS00376">
    <property type="entry name" value="ADOMET_SYNTHASE_1"/>
    <property type="match status" value="1"/>
</dbReference>
<dbReference type="PROSITE" id="PS00377">
    <property type="entry name" value="ADOMET_SYNTHASE_2"/>
    <property type="match status" value="1"/>
</dbReference>
<evidence type="ECO:0000255" key="1">
    <source>
        <dbReference type="HAMAP-Rule" id="MF_00086"/>
    </source>
</evidence>